<protein>
    <recommendedName>
        <fullName evidence="1">Alanine racemase</fullName>
        <ecNumber evidence="1">5.1.1.1</ecNumber>
    </recommendedName>
</protein>
<dbReference type="EC" id="5.1.1.1" evidence="1"/>
<dbReference type="EMBL" id="CP000792">
    <property type="protein sequence ID" value="EAT98028.1"/>
    <property type="molecule type" value="Genomic_DNA"/>
</dbReference>
<dbReference type="RefSeq" id="WP_012001487.1">
    <property type="nucleotide sequence ID" value="NC_009802.2"/>
</dbReference>
<dbReference type="SMR" id="A7ZCL1"/>
<dbReference type="STRING" id="360104.CCC13826_0875"/>
<dbReference type="KEGG" id="cco:CCC13826_0875"/>
<dbReference type="eggNOG" id="COG0787">
    <property type="taxonomic scope" value="Bacteria"/>
</dbReference>
<dbReference type="HOGENOM" id="CLU_028393_2_2_7"/>
<dbReference type="OrthoDB" id="9813814at2"/>
<dbReference type="UniPathway" id="UPA00042">
    <property type="reaction ID" value="UER00497"/>
</dbReference>
<dbReference type="Proteomes" id="UP000001121">
    <property type="component" value="Chromosome"/>
</dbReference>
<dbReference type="GO" id="GO:0005829">
    <property type="term" value="C:cytosol"/>
    <property type="evidence" value="ECO:0007669"/>
    <property type="project" value="TreeGrafter"/>
</dbReference>
<dbReference type="GO" id="GO:0008784">
    <property type="term" value="F:alanine racemase activity"/>
    <property type="evidence" value="ECO:0007669"/>
    <property type="project" value="UniProtKB-UniRule"/>
</dbReference>
<dbReference type="GO" id="GO:0030170">
    <property type="term" value="F:pyridoxal phosphate binding"/>
    <property type="evidence" value="ECO:0007669"/>
    <property type="project" value="UniProtKB-UniRule"/>
</dbReference>
<dbReference type="GO" id="GO:0030632">
    <property type="term" value="P:D-alanine biosynthetic process"/>
    <property type="evidence" value="ECO:0007669"/>
    <property type="project" value="UniProtKB-UniRule"/>
</dbReference>
<dbReference type="GO" id="GO:0009252">
    <property type="term" value="P:peptidoglycan biosynthetic process"/>
    <property type="evidence" value="ECO:0007669"/>
    <property type="project" value="TreeGrafter"/>
</dbReference>
<dbReference type="CDD" id="cd00430">
    <property type="entry name" value="PLPDE_III_AR"/>
    <property type="match status" value="1"/>
</dbReference>
<dbReference type="Gene3D" id="3.20.20.10">
    <property type="entry name" value="Alanine racemase"/>
    <property type="match status" value="1"/>
</dbReference>
<dbReference type="Gene3D" id="2.40.37.10">
    <property type="entry name" value="Lyase, Ornithine Decarboxylase, Chain A, domain 1"/>
    <property type="match status" value="1"/>
</dbReference>
<dbReference type="HAMAP" id="MF_01201">
    <property type="entry name" value="Ala_racemase"/>
    <property type="match status" value="1"/>
</dbReference>
<dbReference type="InterPro" id="IPR000821">
    <property type="entry name" value="Ala_racemase"/>
</dbReference>
<dbReference type="InterPro" id="IPR009006">
    <property type="entry name" value="Ala_racemase/Decarboxylase_C"/>
</dbReference>
<dbReference type="InterPro" id="IPR011079">
    <property type="entry name" value="Ala_racemase_C"/>
</dbReference>
<dbReference type="InterPro" id="IPR001608">
    <property type="entry name" value="Ala_racemase_N"/>
</dbReference>
<dbReference type="InterPro" id="IPR020622">
    <property type="entry name" value="Ala_racemase_pyridoxalP-BS"/>
</dbReference>
<dbReference type="InterPro" id="IPR029066">
    <property type="entry name" value="PLP-binding_barrel"/>
</dbReference>
<dbReference type="NCBIfam" id="NF000791">
    <property type="entry name" value="PRK00053.2-2"/>
    <property type="match status" value="1"/>
</dbReference>
<dbReference type="PANTHER" id="PTHR30511">
    <property type="entry name" value="ALANINE RACEMASE"/>
    <property type="match status" value="1"/>
</dbReference>
<dbReference type="PANTHER" id="PTHR30511:SF0">
    <property type="entry name" value="ALANINE RACEMASE, CATABOLIC-RELATED"/>
    <property type="match status" value="1"/>
</dbReference>
<dbReference type="Pfam" id="PF00842">
    <property type="entry name" value="Ala_racemase_C"/>
    <property type="match status" value="1"/>
</dbReference>
<dbReference type="Pfam" id="PF01168">
    <property type="entry name" value="Ala_racemase_N"/>
    <property type="match status" value="1"/>
</dbReference>
<dbReference type="PRINTS" id="PR00992">
    <property type="entry name" value="ALARACEMASE"/>
</dbReference>
<dbReference type="SMART" id="SM01005">
    <property type="entry name" value="Ala_racemase_C"/>
    <property type="match status" value="1"/>
</dbReference>
<dbReference type="SUPFAM" id="SSF50621">
    <property type="entry name" value="Alanine racemase C-terminal domain-like"/>
    <property type="match status" value="1"/>
</dbReference>
<dbReference type="SUPFAM" id="SSF51419">
    <property type="entry name" value="PLP-binding barrel"/>
    <property type="match status" value="1"/>
</dbReference>
<dbReference type="PROSITE" id="PS00395">
    <property type="entry name" value="ALANINE_RACEMASE"/>
    <property type="match status" value="1"/>
</dbReference>
<comment type="function">
    <text evidence="1">Catalyzes the interconversion of L-alanine and D-alanine. May also act on other amino acids.</text>
</comment>
<comment type="catalytic activity">
    <reaction evidence="1">
        <text>L-alanine = D-alanine</text>
        <dbReference type="Rhea" id="RHEA:20249"/>
        <dbReference type="ChEBI" id="CHEBI:57416"/>
        <dbReference type="ChEBI" id="CHEBI:57972"/>
        <dbReference type="EC" id="5.1.1.1"/>
    </reaction>
</comment>
<comment type="cofactor">
    <cofactor evidence="1">
        <name>pyridoxal 5'-phosphate</name>
        <dbReference type="ChEBI" id="CHEBI:597326"/>
    </cofactor>
</comment>
<comment type="pathway">
    <text evidence="1">Amino-acid biosynthesis; D-alanine biosynthesis; D-alanine from L-alanine: step 1/1.</text>
</comment>
<comment type="similarity">
    <text evidence="1">Belongs to the alanine racemase family.</text>
</comment>
<feature type="chain" id="PRO_1000138584" description="Alanine racemase">
    <location>
        <begin position="1"/>
        <end position="337"/>
    </location>
</feature>
<feature type="active site" description="Proton acceptor; specific for D-alanine" evidence="1">
    <location>
        <position position="33"/>
    </location>
</feature>
<feature type="active site" description="Proton acceptor; specific for L-alanine" evidence="1">
    <location>
        <position position="246"/>
    </location>
</feature>
<feature type="binding site" evidence="1">
    <location>
        <position position="118"/>
    </location>
    <ligand>
        <name>substrate</name>
    </ligand>
</feature>
<feature type="binding site" evidence="1">
    <location>
        <position position="292"/>
    </location>
    <ligand>
        <name>substrate</name>
    </ligand>
</feature>
<feature type="modified residue" description="N6-(pyridoxal phosphate)lysine" evidence="1">
    <location>
        <position position="33"/>
    </location>
</feature>
<proteinExistence type="inferred from homology"/>
<keyword id="KW-0413">Isomerase</keyword>
<keyword id="KW-0663">Pyridoxal phosphate</keyword>
<organism>
    <name type="scientific">Campylobacter concisus (strain 13826)</name>
    <dbReference type="NCBI Taxonomy" id="360104"/>
    <lineage>
        <taxon>Bacteria</taxon>
        <taxon>Pseudomonadati</taxon>
        <taxon>Campylobacterota</taxon>
        <taxon>Epsilonproteobacteria</taxon>
        <taxon>Campylobacterales</taxon>
        <taxon>Campylobacteraceae</taxon>
        <taxon>Campylobacter</taxon>
    </lineage>
</organism>
<evidence type="ECO:0000255" key="1">
    <source>
        <dbReference type="HAMAP-Rule" id="MF_01201"/>
    </source>
</evidence>
<gene>
    <name type="primary">alr</name>
    <name type="ordered locus">Ccon26_06350</name>
    <name type="ORF">CCC13826_0875</name>
</gene>
<reference key="1">
    <citation type="submission" date="2007-10" db="EMBL/GenBank/DDBJ databases">
        <title>Genome sequence of Campylobacter concisus 13826 isolated from human feces.</title>
        <authorList>
            <person name="Fouts D.E."/>
            <person name="Mongodin E.F."/>
            <person name="Puiu D."/>
            <person name="Sebastian Y."/>
            <person name="Miller W.G."/>
            <person name="Mandrell R.E."/>
            <person name="On S."/>
            <person name="Nelson K.E."/>
        </authorList>
    </citation>
    <scope>NUCLEOTIDE SEQUENCE [LARGE SCALE GENOMIC DNA]</scope>
    <source>
        <strain>13826</strain>
    </source>
</reference>
<accession>A7ZCL1</accession>
<sequence length="337" mass="37433">MSEIHLNKAAYIHNLTKICDKAGGKENVIVVLKDNAYGHGARLIASEAKKFGIKNCAVKSECEANEIADIFENILILSHVPTGDESAKFTYAINDIDALLKIKENTKINLAIDTGMHRNGLDISELDYAFEILARRNLELLGAYTHFRASDELNADYFVQRENFSAAKAKILALCDEFGIKKPIFHSHNSAALERASEIKDEMVRVGIAQYGYAQFNGSLNLKPVLSLWAKRVSRRVLKSGQSVGYGAKFIAKDDINVATYDLGYGDGLLRYNGLGELRLANGELILGKISMDSFSCKDSGEWVCVFEDANVWAEFFGTINYDILVKLSPNITRKFI</sequence>
<name>ALR_CAMC1</name>